<organism>
    <name type="scientific">Clostridium botulinum (strain ATCC 19397 / Type A)</name>
    <dbReference type="NCBI Taxonomy" id="441770"/>
    <lineage>
        <taxon>Bacteria</taxon>
        <taxon>Bacillati</taxon>
        <taxon>Bacillota</taxon>
        <taxon>Clostridia</taxon>
        <taxon>Eubacteriales</taxon>
        <taxon>Clostridiaceae</taxon>
        <taxon>Clostridium</taxon>
    </lineage>
</organism>
<reference key="1">
    <citation type="journal article" date="2007" name="PLoS ONE">
        <title>Analysis of the neurotoxin complex genes in Clostridium botulinum A1-A4 and B1 strains: BoNT/A3, /Ba4 and /B1 clusters are located within plasmids.</title>
        <authorList>
            <person name="Smith T.J."/>
            <person name="Hill K.K."/>
            <person name="Foley B.T."/>
            <person name="Detter J.C."/>
            <person name="Munk A.C."/>
            <person name="Bruce D.C."/>
            <person name="Doggett N.A."/>
            <person name="Smith L.A."/>
            <person name="Marks J.D."/>
            <person name="Xie G."/>
            <person name="Brettin T.S."/>
        </authorList>
    </citation>
    <scope>NUCLEOTIDE SEQUENCE [LARGE SCALE GENOMIC DNA]</scope>
    <source>
        <strain>ATCC 19397 / Type A</strain>
    </source>
</reference>
<feature type="chain" id="PRO_1000094681" description="UDP-N-acetylglucosamine 1-carboxyvinyltransferase">
    <location>
        <begin position="1"/>
        <end position="417"/>
    </location>
</feature>
<feature type="active site" description="Proton donor" evidence="1">
    <location>
        <position position="118"/>
    </location>
</feature>
<feature type="binding site" evidence="1">
    <location>
        <begin position="22"/>
        <end position="23"/>
    </location>
    <ligand>
        <name>phosphoenolpyruvate</name>
        <dbReference type="ChEBI" id="CHEBI:58702"/>
    </ligand>
</feature>
<feature type="binding site" evidence="1">
    <location>
        <position position="94"/>
    </location>
    <ligand>
        <name>UDP-N-acetyl-alpha-D-glucosamine</name>
        <dbReference type="ChEBI" id="CHEBI:57705"/>
    </ligand>
</feature>
<feature type="binding site" evidence="1">
    <location>
        <begin position="123"/>
        <end position="127"/>
    </location>
    <ligand>
        <name>UDP-N-acetyl-alpha-D-glucosamine</name>
        <dbReference type="ChEBI" id="CHEBI:57705"/>
    </ligand>
</feature>
<feature type="binding site" evidence="1">
    <location>
        <position position="306"/>
    </location>
    <ligand>
        <name>UDP-N-acetyl-alpha-D-glucosamine</name>
        <dbReference type="ChEBI" id="CHEBI:57705"/>
    </ligand>
</feature>
<feature type="binding site" evidence="1">
    <location>
        <position position="328"/>
    </location>
    <ligand>
        <name>UDP-N-acetyl-alpha-D-glucosamine</name>
        <dbReference type="ChEBI" id="CHEBI:57705"/>
    </ligand>
</feature>
<feature type="modified residue" description="2-(S-cysteinyl)pyruvic acid O-phosphothioketal" evidence="1">
    <location>
        <position position="118"/>
    </location>
</feature>
<comment type="function">
    <text evidence="1">Cell wall formation. Adds enolpyruvyl to UDP-N-acetylglucosamine.</text>
</comment>
<comment type="catalytic activity">
    <reaction evidence="1">
        <text>phosphoenolpyruvate + UDP-N-acetyl-alpha-D-glucosamine = UDP-N-acetyl-3-O-(1-carboxyvinyl)-alpha-D-glucosamine + phosphate</text>
        <dbReference type="Rhea" id="RHEA:18681"/>
        <dbReference type="ChEBI" id="CHEBI:43474"/>
        <dbReference type="ChEBI" id="CHEBI:57705"/>
        <dbReference type="ChEBI" id="CHEBI:58702"/>
        <dbReference type="ChEBI" id="CHEBI:68483"/>
        <dbReference type="EC" id="2.5.1.7"/>
    </reaction>
</comment>
<comment type="pathway">
    <text evidence="1">Cell wall biogenesis; peptidoglycan biosynthesis.</text>
</comment>
<comment type="subcellular location">
    <subcellularLocation>
        <location evidence="1">Cytoplasm</location>
    </subcellularLocation>
</comment>
<comment type="similarity">
    <text evidence="1">Belongs to the EPSP synthase family. MurA subfamily.</text>
</comment>
<name>MURA_CLOB1</name>
<protein>
    <recommendedName>
        <fullName evidence="1">UDP-N-acetylglucosamine 1-carboxyvinyltransferase</fullName>
        <ecNumber evidence="1">2.5.1.7</ecNumber>
    </recommendedName>
    <alternativeName>
        <fullName evidence="1">Enoylpyruvate transferase</fullName>
    </alternativeName>
    <alternativeName>
        <fullName evidence="1">UDP-N-acetylglucosamine enolpyruvyl transferase</fullName>
        <shortName evidence="1">EPT</shortName>
    </alternativeName>
</protein>
<accession>A7FZC7</accession>
<dbReference type="EC" id="2.5.1.7" evidence="1"/>
<dbReference type="EMBL" id="CP000726">
    <property type="protein sequence ID" value="ABS35395.1"/>
    <property type="molecule type" value="Genomic_DNA"/>
</dbReference>
<dbReference type="RefSeq" id="WP_003359322.1">
    <property type="nucleotide sequence ID" value="NC_009697.1"/>
</dbReference>
<dbReference type="SMR" id="A7FZC7"/>
<dbReference type="KEGG" id="cba:CLB_3647"/>
<dbReference type="HOGENOM" id="CLU_027387_0_0_9"/>
<dbReference type="UniPathway" id="UPA00219"/>
<dbReference type="GO" id="GO:0005737">
    <property type="term" value="C:cytoplasm"/>
    <property type="evidence" value="ECO:0007669"/>
    <property type="project" value="UniProtKB-SubCell"/>
</dbReference>
<dbReference type="GO" id="GO:0008760">
    <property type="term" value="F:UDP-N-acetylglucosamine 1-carboxyvinyltransferase activity"/>
    <property type="evidence" value="ECO:0007669"/>
    <property type="project" value="UniProtKB-UniRule"/>
</dbReference>
<dbReference type="GO" id="GO:0051301">
    <property type="term" value="P:cell division"/>
    <property type="evidence" value="ECO:0007669"/>
    <property type="project" value="UniProtKB-KW"/>
</dbReference>
<dbReference type="GO" id="GO:0071555">
    <property type="term" value="P:cell wall organization"/>
    <property type="evidence" value="ECO:0007669"/>
    <property type="project" value="UniProtKB-KW"/>
</dbReference>
<dbReference type="GO" id="GO:0009252">
    <property type="term" value="P:peptidoglycan biosynthetic process"/>
    <property type="evidence" value="ECO:0007669"/>
    <property type="project" value="UniProtKB-UniRule"/>
</dbReference>
<dbReference type="GO" id="GO:0008360">
    <property type="term" value="P:regulation of cell shape"/>
    <property type="evidence" value="ECO:0007669"/>
    <property type="project" value="UniProtKB-KW"/>
</dbReference>
<dbReference type="GO" id="GO:0019277">
    <property type="term" value="P:UDP-N-acetylgalactosamine biosynthetic process"/>
    <property type="evidence" value="ECO:0007669"/>
    <property type="project" value="InterPro"/>
</dbReference>
<dbReference type="CDD" id="cd01555">
    <property type="entry name" value="UdpNAET"/>
    <property type="match status" value="1"/>
</dbReference>
<dbReference type="FunFam" id="3.65.10.10:FF:000001">
    <property type="entry name" value="UDP-N-acetylglucosamine 1-carboxyvinyltransferase"/>
    <property type="match status" value="1"/>
</dbReference>
<dbReference type="Gene3D" id="3.65.10.10">
    <property type="entry name" value="Enolpyruvate transferase domain"/>
    <property type="match status" value="2"/>
</dbReference>
<dbReference type="HAMAP" id="MF_00111">
    <property type="entry name" value="MurA"/>
    <property type="match status" value="1"/>
</dbReference>
<dbReference type="InterPro" id="IPR001986">
    <property type="entry name" value="Enolpyruvate_Tfrase_dom"/>
</dbReference>
<dbReference type="InterPro" id="IPR036968">
    <property type="entry name" value="Enolpyruvate_Tfrase_sf"/>
</dbReference>
<dbReference type="InterPro" id="IPR050068">
    <property type="entry name" value="MurA_subfamily"/>
</dbReference>
<dbReference type="InterPro" id="IPR013792">
    <property type="entry name" value="RNA3'P_cycl/enolpyr_Trfase_a/b"/>
</dbReference>
<dbReference type="InterPro" id="IPR005750">
    <property type="entry name" value="UDP_GlcNAc_COvinyl_MurA"/>
</dbReference>
<dbReference type="NCBIfam" id="TIGR01072">
    <property type="entry name" value="murA"/>
    <property type="match status" value="1"/>
</dbReference>
<dbReference type="NCBIfam" id="NF006873">
    <property type="entry name" value="PRK09369.1"/>
    <property type="match status" value="1"/>
</dbReference>
<dbReference type="NCBIfam" id="NF009470">
    <property type="entry name" value="PRK12830.1"/>
    <property type="match status" value="1"/>
</dbReference>
<dbReference type="PANTHER" id="PTHR43783">
    <property type="entry name" value="UDP-N-ACETYLGLUCOSAMINE 1-CARBOXYVINYLTRANSFERASE"/>
    <property type="match status" value="1"/>
</dbReference>
<dbReference type="PANTHER" id="PTHR43783:SF2">
    <property type="entry name" value="UDP-N-ACETYLGLUCOSAMINE 1-CARBOXYVINYLTRANSFERASE 2"/>
    <property type="match status" value="1"/>
</dbReference>
<dbReference type="Pfam" id="PF00275">
    <property type="entry name" value="EPSP_synthase"/>
    <property type="match status" value="1"/>
</dbReference>
<dbReference type="SUPFAM" id="SSF55205">
    <property type="entry name" value="EPT/RTPC-like"/>
    <property type="match status" value="1"/>
</dbReference>
<keyword id="KW-0131">Cell cycle</keyword>
<keyword id="KW-0132">Cell division</keyword>
<keyword id="KW-0133">Cell shape</keyword>
<keyword id="KW-0961">Cell wall biogenesis/degradation</keyword>
<keyword id="KW-0963">Cytoplasm</keyword>
<keyword id="KW-0573">Peptidoglycan synthesis</keyword>
<keyword id="KW-0670">Pyruvate</keyword>
<keyword id="KW-0808">Transferase</keyword>
<proteinExistence type="inferred from homology"/>
<evidence type="ECO:0000255" key="1">
    <source>
        <dbReference type="HAMAP-Rule" id="MF_00111"/>
    </source>
</evidence>
<sequence length="417" mass="44358">MSKLKITGGNPLFGKVEISGAKNAAVAILPATIMASKGVCTIENTPNIEDVHCIERILNGLGCEIKRQSNSILQIDSTNITKTDANTEDVRKMRASYYLIGALLGRFKKARVELPGGCPIGVRPIDQHIKGFEALGAHVEIEHGAVIVKADKLIGTNIFFDVVSVGATINVMLAATLAEGNTVLENVAKEPHVVDVANFLNSMGANIKGAGTDIIRVTGVKELKGCTYSVIPDQIEAGTYMIATAACGGEVTINNVIPKHLESITAKLIEMGVDVIENGDSVTVKSKGNFKGANIKTQPYPGFPTDVQQPMSTLLTIAKGRSIVNESIWESRFKHVDELKKMGANIKVEGRTAIIDGVPKLTGAIVKATDLRAGAAMVIAGLLAEGDTEILGVEHIDRGYPNIENKFRSLGATIVRL</sequence>
<gene>
    <name evidence="1" type="primary">murA</name>
    <name type="ordered locus">CLB_3647</name>
</gene>